<reference key="1">
    <citation type="journal article" date="2007" name="Antimicrob. Agents Chemother.">
        <title>Sequencing and comparative genomic analysis of pK29, a 269-kilobase conjugative plasmid encoding CMY-8 and CTX-M-3 beta-lactamases in Klebsiella pneumoniae.</title>
        <authorList>
            <person name="Chen Y.-T."/>
            <person name="Lauderdale T.-L."/>
            <person name="Liao T.-L."/>
            <person name="Shiau Y.-R."/>
            <person name="Shu H.-Y."/>
            <person name="Wu K.-M."/>
            <person name="Yan J.-J."/>
            <person name="Su I.-J."/>
            <person name="Tsai S.-F."/>
        </authorList>
    </citation>
    <scope>NUCLEOTIDE SEQUENCE [GENOMIC DNA]</scope>
    <source>
        <strain>NK29</strain>
    </source>
</reference>
<keyword id="KW-0326">Glycosidase</keyword>
<keyword id="KW-0378">Hydrolase</keyword>
<keyword id="KW-0460">Magnesium</keyword>
<keyword id="KW-0479">Metal-binding</keyword>
<keyword id="KW-0614">Plasmid</keyword>
<keyword id="KW-0915">Sodium</keyword>
<comment type="catalytic activity">
    <reaction evidence="1">
        <text>Hydrolysis of terminal non-reducing beta-D-galactose residues in beta-D-galactosides.</text>
        <dbReference type="EC" id="3.2.1.23"/>
    </reaction>
</comment>
<comment type="cofactor">
    <cofactor evidence="1">
        <name>Mg(2+)</name>
        <dbReference type="ChEBI" id="CHEBI:18420"/>
    </cofactor>
    <text evidence="1">Binds 2 magnesium ions per monomer.</text>
</comment>
<comment type="cofactor">
    <cofactor evidence="1">
        <name>Na(+)</name>
        <dbReference type="ChEBI" id="CHEBI:29101"/>
    </cofactor>
    <text evidence="1">Binds 1 sodium ion per monomer.</text>
</comment>
<comment type="subunit">
    <text evidence="1">Homotetramer.</text>
</comment>
<comment type="similarity">
    <text evidence="1">Belongs to the glycosyl hydrolase 2 family.</text>
</comment>
<organism>
    <name type="scientific">Klebsiella pneumoniae</name>
    <dbReference type="NCBI Taxonomy" id="573"/>
    <lineage>
        <taxon>Bacteria</taxon>
        <taxon>Pseudomonadati</taxon>
        <taxon>Pseudomonadota</taxon>
        <taxon>Gammaproteobacteria</taxon>
        <taxon>Enterobacterales</taxon>
        <taxon>Enterobacteriaceae</taxon>
        <taxon>Klebsiella/Raoultella group</taxon>
        <taxon>Klebsiella</taxon>
        <taxon>Klebsiella pneumoniae complex</taxon>
    </lineage>
</organism>
<geneLocation type="plasmid">
    <name>pK29</name>
</geneLocation>
<sequence>MTMITDSLAVVLQRRDWENPGVTQLNRLAAHPPFASWRNSEEARTDRPSQESRSLNGEWRFAWFPAPEAVPESWLERDLPDADTVIVPSNWQMHGYDAPIYTNVTYPIAVNPPYVPTENPTGCYSLTFNVDESWLQEGQTRIIFDGVNSAFHLWCNGRWVGYGQDSRLPSEFDLSAFLHAGENRLAVMVLRWSDGSYLEDQDMWRMSGIFRDVSLLHKPSTQISDFHVATHFNDDFSRAVLEADVQMYGELRDELRVTVSLWQGETQVASGTAPFGGEIIDERGGYADHVTLRLNVENPKLWSAEIPNLYRAVVELHTADGTLIEAEACDVGFREVRIENGLLLLNGKPLLIRGVNRHEHHPLHGQVMDEQTMVQDILLMKQNNFNAVRCSHYPNHPLWYTLCDHYGLYVVDEANIETHGMVPMNRLTDDPRWLPAMSERVTRMVQRDRNHPSVIIWSLGNESGHGANHDALYRWIKSVDPSRPVQYEGGGADTFATDIICPMYARVDEDQPFPAVPKWSIKKWLSLPGETRPLILCEYAHAMGNSLGGFAKYWQAFRQYPRLQGGFVWDWVDQSLIKYDENGNPWSAYGGDFGDTPNDRQFCMNGLVFADRTPHPALTEAKHQQQFFQFSLSGRTIEVTSEDLFRHSDNELLHWMVALDGKPLASGEVPLDVAPQGKQLIELPELPQPESAGQLWLTVHVVQPNATTWSAAGHISAWQQWRLAENLSVTLPSAPHAIPQLTTSETDFCIELDNKRWQFNRQSGFLSQMWIGDKKQLLTPLRDQFTRAPLDNDIGVSEATRIDPNAWVERWKAAGHYQAEAALLQCTADTLADAVLITTVHAWQHQGKTLFISRKTYRIDGSGQMAITVDVEVASNTPHPARIGLTCQLAQVAERVNWLGLGPQENYPDRLTAACFDRWDLPLSDMYTPYVFPSENGLRCGTRELNYGPHQWRGDFQFNISRYSQQQLMETSHRHLLHAEEGTWLNIDGFHMGIGGDDSWSPSVSAEFHLSAGSYHYQLLWCQK</sequence>
<evidence type="ECO:0000255" key="1">
    <source>
        <dbReference type="HAMAP-Rule" id="MF_01687"/>
    </source>
</evidence>
<gene>
    <name evidence="1" type="primary">lacZ</name>
</gene>
<dbReference type="EC" id="3.2.1.23" evidence="1"/>
<dbReference type="EMBL" id="EF382672">
    <property type="protein sequence ID" value="ABQ02972.1"/>
    <property type="molecule type" value="Genomic_DNA"/>
</dbReference>
<dbReference type="RefSeq" id="WP_012477407.1">
    <property type="nucleotide sequence ID" value="NZ_BGLF01000080.1"/>
</dbReference>
<dbReference type="RefSeq" id="YP_001965915.1">
    <property type="nucleotide sequence ID" value="NC_010870.1"/>
</dbReference>
<dbReference type="SMR" id="A7KGA5"/>
<dbReference type="CAZy" id="GH2">
    <property type="family name" value="Glycoside Hydrolase Family 2"/>
</dbReference>
<dbReference type="GO" id="GO:0009341">
    <property type="term" value="C:beta-galactosidase complex"/>
    <property type="evidence" value="ECO:0007669"/>
    <property type="project" value="InterPro"/>
</dbReference>
<dbReference type="GO" id="GO:0004565">
    <property type="term" value="F:beta-galactosidase activity"/>
    <property type="evidence" value="ECO:0007669"/>
    <property type="project" value="UniProtKB-EC"/>
</dbReference>
<dbReference type="GO" id="GO:0030246">
    <property type="term" value="F:carbohydrate binding"/>
    <property type="evidence" value="ECO:0007669"/>
    <property type="project" value="InterPro"/>
</dbReference>
<dbReference type="GO" id="GO:0000287">
    <property type="term" value="F:magnesium ion binding"/>
    <property type="evidence" value="ECO:0007669"/>
    <property type="project" value="UniProtKB-UniRule"/>
</dbReference>
<dbReference type="GO" id="GO:0005990">
    <property type="term" value="P:lactose catabolic process"/>
    <property type="evidence" value="ECO:0007669"/>
    <property type="project" value="TreeGrafter"/>
</dbReference>
<dbReference type="FunFam" id="2.60.120.260:FF:000058">
    <property type="entry name" value="Beta-galactosidase"/>
    <property type="match status" value="1"/>
</dbReference>
<dbReference type="FunFam" id="2.60.40.10:FF:000680">
    <property type="entry name" value="Beta-galactosidase"/>
    <property type="match status" value="1"/>
</dbReference>
<dbReference type="FunFam" id="2.60.40.10:FF:000850">
    <property type="entry name" value="Beta-galactosidase"/>
    <property type="match status" value="1"/>
</dbReference>
<dbReference type="FunFam" id="2.70.98.10:FF:000006">
    <property type="entry name" value="Beta-galactosidase"/>
    <property type="match status" value="1"/>
</dbReference>
<dbReference type="FunFam" id="3.20.20.80:FF:000018">
    <property type="entry name" value="Beta-galactosidase"/>
    <property type="match status" value="1"/>
</dbReference>
<dbReference type="Gene3D" id="2.70.98.10">
    <property type="match status" value="1"/>
</dbReference>
<dbReference type="Gene3D" id="2.60.120.260">
    <property type="entry name" value="Galactose-binding domain-like"/>
    <property type="match status" value="1"/>
</dbReference>
<dbReference type="Gene3D" id="3.20.20.80">
    <property type="entry name" value="Glycosidases"/>
    <property type="match status" value="1"/>
</dbReference>
<dbReference type="Gene3D" id="2.60.40.10">
    <property type="entry name" value="Immunoglobulins"/>
    <property type="match status" value="2"/>
</dbReference>
<dbReference type="HAMAP" id="MF_01687">
    <property type="entry name" value="Beta_gal"/>
    <property type="match status" value="1"/>
</dbReference>
<dbReference type="InterPro" id="IPR004199">
    <property type="entry name" value="B-gal_small/dom_5"/>
</dbReference>
<dbReference type="InterPro" id="IPR050347">
    <property type="entry name" value="Bact_Beta-galactosidase"/>
</dbReference>
<dbReference type="InterPro" id="IPR036156">
    <property type="entry name" value="Beta-gal/glucu_dom_sf"/>
</dbReference>
<dbReference type="InterPro" id="IPR011013">
    <property type="entry name" value="Gal_mutarotase_sf_dom"/>
</dbReference>
<dbReference type="InterPro" id="IPR008979">
    <property type="entry name" value="Galactose-bd-like_sf"/>
</dbReference>
<dbReference type="InterPro" id="IPR014718">
    <property type="entry name" value="GH-type_carb-bd"/>
</dbReference>
<dbReference type="InterPro" id="IPR006101">
    <property type="entry name" value="Glyco_hydro_2"/>
</dbReference>
<dbReference type="InterPro" id="IPR023232">
    <property type="entry name" value="Glyco_hydro_2_AS"/>
</dbReference>
<dbReference type="InterPro" id="IPR023933">
    <property type="entry name" value="Glyco_hydro_2_beta_Galsidase"/>
</dbReference>
<dbReference type="InterPro" id="IPR006103">
    <property type="entry name" value="Glyco_hydro_2_cat"/>
</dbReference>
<dbReference type="InterPro" id="IPR023230">
    <property type="entry name" value="Glyco_hydro_2_CS"/>
</dbReference>
<dbReference type="InterPro" id="IPR006102">
    <property type="entry name" value="Glyco_hydro_2_Ig-like"/>
</dbReference>
<dbReference type="InterPro" id="IPR006104">
    <property type="entry name" value="Glyco_hydro_2_N"/>
</dbReference>
<dbReference type="InterPro" id="IPR017853">
    <property type="entry name" value="Glycoside_hydrolase_SF"/>
</dbReference>
<dbReference type="InterPro" id="IPR013783">
    <property type="entry name" value="Ig-like_fold"/>
</dbReference>
<dbReference type="InterPro" id="IPR032312">
    <property type="entry name" value="LacZ_4"/>
</dbReference>
<dbReference type="NCBIfam" id="NF007074">
    <property type="entry name" value="PRK09525.1"/>
    <property type="match status" value="1"/>
</dbReference>
<dbReference type="PANTHER" id="PTHR46323">
    <property type="entry name" value="BETA-GALACTOSIDASE"/>
    <property type="match status" value="1"/>
</dbReference>
<dbReference type="PANTHER" id="PTHR46323:SF2">
    <property type="entry name" value="BETA-GALACTOSIDASE"/>
    <property type="match status" value="1"/>
</dbReference>
<dbReference type="Pfam" id="PF02929">
    <property type="entry name" value="Bgal_small_N"/>
    <property type="match status" value="1"/>
</dbReference>
<dbReference type="Pfam" id="PF00703">
    <property type="entry name" value="Glyco_hydro_2"/>
    <property type="match status" value="1"/>
</dbReference>
<dbReference type="Pfam" id="PF02836">
    <property type="entry name" value="Glyco_hydro_2_C"/>
    <property type="match status" value="1"/>
</dbReference>
<dbReference type="Pfam" id="PF02837">
    <property type="entry name" value="Glyco_hydro_2_N"/>
    <property type="match status" value="1"/>
</dbReference>
<dbReference type="Pfam" id="PF16353">
    <property type="entry name" value="LacZ_4"/>
    <property type="match status" value="1"/>
</dbReference>
<dbReference type="PRINTS" id="PR00132">
    <property type="entry name" value="GLHYDRLASE2"/>
</dbReference>
<dbReference type="SMART" id="SM01038">
    <property type="entry name" value="Bgal_small_N"/>
    <property type="match status" value="1"/>
</dbReference>
<dbReference type="SUPFAM" id="SSF51445">
    <property type="entry name" value="(Trans)glycosidases"/>
    <property type="match status" value="1"/>
</dbReference>
<dbReference type="SUPFAM" id="SSF49303">
    <property type="entry name" value="beta-Galactosidase/glucuronidase domain"/>
    <property type="match status" value="2"/>
</dbReference>
<dbReference type="SUPFAM" id="SSF74650">
    <property type="entry name" value="Galactose mutarotase-like"/>
    <property type="match status" value="1"/>
</dbReference>
<dbReference type="SUPFAM" id="SSF49785">
    <property type="entry name" value="Galactose-binding domain-like"/>
    <property type="match status" value="1"/>
</dbReference>
<dbReference type="PROSITE" id="PS00719">
    <property type="entry name" value="GLYCOSYL_HYDROL_F2_1"/>
    <property type="match status" value="1"/>
</dbReference>
<dbReference type="PROSITE" id="PS00608">
    <property type="entry name" value="GLYCOSYL_HYDROL_F2_2"/>
    <property type="match status" value="1"/>
</dbReference>
<proteinExistence type="inferred from homology"/>
<name>BGAL2_KLEPN</name>
<protein>
    <recommendedName>
        <fullName evidence="1">Beta-galactosidase</fullName>
        <shortName evidence="1">Beta-gal</shortName>
        <ecNumber evidence="1">3.2.1.23</ecNumber>
    </recommendedName>
    <alternativeName>
        <fullName evidence="1">Lactase</fullName>
    </alternativeName>
</protein>
<feature type="chain" id="PRO_0000366999" description="Beta-galactosidase">
    <location>
        <begin position="1"/>
        <end position="1024"/>
    </location>
</feature>
<feature type="active site" description="Proton donor" evidence="1">
    <location>
        <position position="462"/>
    </location>
</feature>
<feature type="active site" description="Nucleophile" evidence="1">
    <location>
        <position position="538"/>
    </location>
</feature>
<feature type="binding site" evidence="1">
    <location>
        <position position="103"/>
    </location>
    <ligand>
        <name>substrate</name>
    </ligand>
</feature>
<feature type="binding site" evidence="1">
    <location>
        <position position="202"/>
    </location>
    <ligand>
        <name>Na(+)</name>
        <dbReference type="ChEBI" id="CHEBI:29101"/>
    </ligand>
</feature>
<feature type="binding site" evidence="1">
    <location>
        <position position="202"/>
    </location>
    <ligand>
        <name>substrate</name>
    </ligand>
</feature>
<feature type="binding site" evidence="1">
    <location>
        <position position="417"/>
    </location>
    <ligand>
        <name>Mg(2+)</name>
        <dbReference type="ChEBI" id="CHEBI:18420"/>
        <label>1</label>
    </ligand>
</feature>
<feature type="binding site" evidence="1">
    <location>
        <position position="419"/>
    </location>
    <ligand>
        <name>Mg(2+)</name>
        <dbReference type="ChEBI" id="CHEBI:18420"/>
        <label>1</label>
    </ligand>
</feature>
<feature type="binding site" evidence="1">
    <location>
        <position position="462"/>
    </location>
    <ligand>
        <name>Mg(2+)</name>
        <dbReference type="ChEBI" id="CHEBI:18420"/>
        <label>1</label>
    </ligand>
</feature>
<feature type="binding site" evidence="1">
    <location>
        <position position="462"/>
    </location>
    <ligand>
        <name>substrate</name>
    </ligand>
</feature>
<feature type="binding site" evidence="1">
    <location>
        <begin position="538"/>
        <end position="541"/>
    </location>
    <ligand>
        <name>substrate</name>
    </ligand>
</feature>
<feature type="binding site" evidence="1">
    <location>
        <position position="598"/>
    </location>
    <ligand>
        <name>Mg(2+)</name>
        <dbReference type="ChEBI" id="CHEBI:18420"/>
        <label>2</label>
    </ligand>
</feature>
<feature type="binding site" evidence="1">
    <location>
        <position position="602"/>
    </location>
    <ligand>
        <name>Na(+)</name>
        <dbReference type="ChEBI" id="CHEBI:29101"/>
    </ligand>
</feature>
<feature type="binding site" evidence="1">
    <location>
        <position position="605"/>
    </location>
    <ligand>
        <name>Na(+)</name>
        <dbReference type="ChEBI" id="CHEBI:29101"/>
    </ligand>
</feature>
<feature type="binding site" evidence="1">
    <location>
        <position position="605"/>
    </location>
    <ligand>
        <name>substrate</name>
    </ligand>
</feature>
<feature type="binding site" evidence="1">
    <location>
        <position position="1000"/>
    </location>
    <ligand>
        <name>substrate</name>
    </ligand>
</feature>
<feature type="site" description="Transition state stabilizer" evidence="1">
    <location>
        <position position="358"/>
    </location>
</feature>
<feature type="site" description="Transition state stabilizer" evidence="1">
    <location>
        <position position="392"/>
    </location>
</feature>
<accession>A7KGA5</accession>